<reference key="1">
    <citation type="journal article" date="2002" name="Lancet">
        <title>Genome and virulence determinants of high virulence community-acquired MRSA.</title>
        <authorList>
            <person name="Baba T."/>
            <person name="Takeuchi F."/>
            <person name="Kuroda M."/>
            <person name="Yuzawa H."/>
            <person name="Aoki K."/>
            <person name="Oguchi A."/>
            <person name="Nagai Y."/>
            <person name="Iwama N."/>
            <person name="Asano K."/>
            <person name="Naimi T."/>
            <person name="Kuroda H."/>
            <person name="Cui L."/>
            <person name="Yamamoto K."/>
            <person name="Hiramatsu K."/>
        </authorList>
    </citation>
    <scope>NUCLEOTIDE SEQUENCE [LARGE SCALE GENOMIC DNA]</scope>
    <source>
        <strain>MW2</strain>
    </source>
</reference>
<gene>
    <name evidence="1" type="primary">lgt</name>
    <name type="ordered locus">MW0723</name>
</gene>
<comment type="function">
    <text evidence="1">Catalyzes the transfer of the diacylglyceryl group from phosphatidylglycerol to the sulfhydryl group of the N-terminal cysteine of a prolipoprotein, the first step in the formation of mature lipoproteins.</text>
</comment>
<comment type="catalytic activity">
    <reaction evidence="1">
        <text>L-cysteinyl-[prolipoprotein] + a 1,2-diacyl-sn-glycero-3-phospho-(1'-sn-glycerol) = an S-1,2-diacyl-sn-glyceryl-L-cysteinyl-[prolipoprotein] + sn-glycerol 1-phosphate + H(+)</text>
        <dbReference type="Rhea" id="RHEA:56712"/>
        <dbReference type="Rhea" id="RHEA-COMP:14679"/>
        <dbReference type="Rhea" id="RHEA-COMP:14680"/>
        <dbReference type="ChEBI" id="CHEBI:15378"/>
        <dbReference type="ChEBI" id="CHEBI:29950"/>
        <dbReference type="ChEBI" id="CHEBI:57685"/>
        <dbReference type="ChEBI" id="CHEBI:64716"/>
        <dbReference type="ChEBI" id="CHEBI:140658"/>
        <dbReference type="EC" id="2.5.1.145"/>
    </reaction>
</comment>
<comment type="pathway">
    <text evidence="1">Protein modification; lipoprotein biosynthesis (diacylglyceryl transfer).</text>
</comment>
<comment type="subcellular location">
    <subcellularLocation>
        <location evidence="1">Cell membrane</location>
        <topology evidence="1">Multi-pass membrane protein</topology>
    </subcellularLocation>
</comment>
<comment type="similarity">
    <text evidence="1 2">Belongs to the Lgt family.</text>
</comment>
<organism>
    <name type="scientific">Staphylococcus aureus (strain MW2)</name>
    <dbReference type="NCBI Taxonomy" id="196620"/>
    <lineage>
        <taxon>Bacteria</taxon>
        <taxon>Bacillati</taxon>
        <taxon>Bacillota</taxon>
        <taxon>Bacilli</taxon>
        <taxon>Bacillales</taxon>
        <taxon>Staphylococcaceae</taxon>
        <taxon>Staphylococcus</taxon>
    </lineage>
</organism>
<name>LGT_STAAW</name>
<dbReference type="EC" id="2.5.1.145" evidence="1"/>
<dbReference type="EMBL" id="BA000033">
    <property type="protein sequence ID" value="BAB94588.1"/>
    <property type="molecule type" value="Genomic_DNA"/>
</dbReference>
<dbReference type="RefSeq" id="WP_000513312.1">
    <property type="nucleotide sequence ID" value="NC_003923.1"/>
</dbReference>
<dbReference type="SMR" id="Q8NXL8"/>
<dbReference type="KEGG" id="sam:MW0723"/>
<dbReference type="HOGENOM" id="CLU_013386_0_1_9"/>
<dbReference type="UniPathway" id="UPA00664"/>
<dbReference type="GO" id="GO:0005886">
    <property type="term" value="C:plasma membrane"/>
    <property type="evidence" value="ECO:0007669"/>
    <property type="project" value="UniProtKB-SubCell"/>
</dbReference>
<dbReference type="GO" id="GO:0008961">
    <property type="term" value="F:phosphatidylglycerol-prolipoprotein diacylglyceryl transferase activity"/>
    <property type="evidence" value="ECO:0007669"/>
    <property type="project" value="UniProtKB-UniRule"/>
</dbReference>
<dbReference type="GO" id="GO:0042158">
    <property type="term" value="P:lipoprotein biosynthetic process"/>
    <property type="evidence" value="ECO:0007669"/>
    <property type="project" value="UniProtKB-UniRule"/>
</dbReference>
<dbReference type="HAMAP" id="MF_01147">
    <property type="entry name" value="Lgt"/>
    <property type="match status" value="1"/>
</dbReference>
<dbReference type="InterPro" id="IPR001640">
    <property type="entry name" value="Lgt"/>
</dbReference>
<dbReference type="NCBIfam" id="TIGR00544">
    <property type="entry name" value="lgt"/>
    <property type="match status" value="1"/>
</dbReference>
<dbReference type="PANTHER" id="PTHR30589:SF0">
    <property type="entry name" value="PHOSPHATIDYLGLYCEROL--PROLIPOPROTEIN DIACYLGLYCERYL TRANSFERASE"/>
    <property type="match status" value="1"/>
</dbReference>
<dbReference type="PANTHER" id="PTHR30589">
    <property type="entry name" value="PROLIPOPROTEIN DIACYLGLYCERYL TRANSFERASE"/>
    <property type="match status" value="1"/>
</dbReference>
<dbReference type="Pfam" id="PF01790">
    <property type="entry name" value="LGT"/>
    <property type="match status" value="1"/>
</dbReference>
<dbReference type="PROSITE" id="PS01311">
    <property type="entry name" value="LGT"/>
    <property type="match status" value="1"/>
</dbReference>
<feature type="chain" id="PRO_0000172678" description="Phosphatidylglycerol--prolipoprotein diacylglyceryl transferase">
    <location>
        <begin position="1"/>
        <end position="279"/>
    </location>
</feature>
<feature type="transmembrane region" description="Helical" evidence="1">
    <location>
        <begin position="18"/>
        <end position="38"/>
    </location>
</feature>
<feature type="transmembrane region" description="Helical" evidence="1">
    <location>
        <begin position="55"/>
        <end position="75"/>
    </location>
</feature>
<feature type="transmembrane region" description="Helical" evidence="1">
    <location>
        <begin position="89"/>
        <end position="109"/>
    </location>
</feature>
<feature type="transmembrane region" description="Helical" evidence="1">
    <location>
        <begin position="203"/>
        <end position="223"/>
    </location>
</feature>
<feature type="transmembrane region" description="Helical" evidence="1">
    <location>
        <begin position="235"/>
        <end position="255"/>
    </location>
</feature>
<feature type="binding site" evidence="1">
    <location>
        <position position="137"/>
    </location>
    <ligand>
        <name>a 1,2-diacyl-sn-glycero-3-phospho-(1'-sn-glycerol)</name>
        <dbReference type="ChEBI" id="CHEBI:64716"/>
    </ligand>
</feature>
<accession>Q8NXL8</accession>
<evidence type="ECO:0000255" key="1">
    <source>
        <dbReference type="HAMAP-Rule" id="MF_01147"/>
    </source>
</evidence>
<evidence type="ECO:0000305" key="2"/>
<keyword id="KW-1003">Cell membrane</keyword>
<keyword id="KW-0472">Membrane</keyword>
<keyword id="KW-0808">Transferase</keyword>
<keyword id="KW-0812">Transmembrane</keyword>
<keyword id="KW-1133">Transmembrane helix</keyword>
<sequence>MGIVFNYIDPVAFNLGPLSVRWYGIIIAVGILLGYFVAQRALVKAGLHKDTLVDIIFYSALFGFIAARIYFVIFQWPYYVENPSEIIKIWHGGIAIHGGLIGGFIAGVIVCKVKNLNPFQIGDIVAPSIILAQGIGRWGNFMNHEAHGGPVSRAFLEKLHLPNFIIENMYINGQYYHPTFLYESIWDVAGFIILVNIRKHLKLGETFFLYLTWYSIGRFFIEGLRTDSLMLTSNIRVAQLVSILLILISISLIVYRRIKYNPPLYSKVGALPWPTKKVK</sequence>
<proteinExistence type="inferred from homology"/>
<protein>
    <recommendedName>
        <fullName evidence="1">Phosphatidylglycerol--prolipoprotein diacylglyceryl transferase</fullName>
        <ecNumber evidence="1">2.5.1.145</ecNumber>
    </recommendedName>
</protein>